<gene>
    <name type="primary">bbln</name>
</gene>
<dbReference type="EMBL" id="AY445921">
    <property type="protein sequence ID" value="AAS89344.1"/>
    <property type="molecule type" value="mRNA"/>
</dbReference>
<dbReference type="RefSeq" id="XP_051750687.1">
    <property type="nucleotide sequence ID" value="XM_051894727.1"/>
</dbReference>
<dbReference type="SMR" id="Q6SXP0"/>
<dbReference type="GeneID" id="127513120"/>
<dbReference type="OrthoDB" id="10050612at2759"/>
<dbReference type="GO" id="GO:0070161">
    <property type="term" value="C:anchoring junction"/>
    <property type="evidence" value="ECO:0007669"/>
    <property type="project" value="UniProtKB-SubCell"/>
</dbReference>
<dbReference type="GO" id="GO:0030054">
    <property type="term" value="C:cell junction"/>
    <property type="evidence" value="ECO:0000250"/>
    <property type="project" value="UniProtKB"/>
</dbReference>
<dbReference type="GO" id="GO:0005737">
    <property type="term" value="C:cytoplasm"/>
    <property type="evidence" value="ECO:0007669"/>
    <property type="project" value="UniProtKB-KW"/>
</dbReference>
<dbReference type="GO" id="GO:0005856">
    <property type="term" value="C:cytoskeleton"/>
    <property type="evidence" value="ECO:0007669"/>
    <property type="project" value="UniProtKB-SubCell"/>
</dbReference>
<dbReference type="GO" id="GO:0120219">
    <property type="term" value="C:subapical part of cell"/>
    <property type="evidence" value="ECO:0000250"/>
    <property type="project" value="UniProtKB"/>
</dbReference>
<dbReference type="GO" id="GO:0060090">
    <property type="term" value="F:molecular adaptor activity"/>
    <property type="evidence" value="ECO:0000250"/>
    <property type="project" value="UniProtKB"/>
</dbReference>
<dbReference type="GO" id="GO:0045110">
    <property type="term" value="P:intermediate filament bundle assembly"/>
    <property type="evidence" value="ECO:0000250"/>
    <property type="project" value="UniProtKB"/>
</dbReference>
<dbReference type="InterPro" id="IPR005374">
    <property type="entry name" value="BBLN_eukaryota"/>
</dbReference>
<dbReference type="PANTHER" id="PTHR34344:SF1">
    <property type="entry name" value="BUBLIN COILED-COIL PROTEIN"/>
    <property type="match status" value="1"/>
</dbReference>
<dbReference type="PANTHER" id="PTHR34344">
    <property type="entry name" value="UPF0184 PROTEIN C9ORF16"/>
    <property type="match status" value="1"/>
</dbReference>
<dbReference type="Pfam" id="PF03670">
    <property type="entry name" value="UPF0184"/>
    <property type="match status" value="1"/>
</dbReference>
<sequence length="96" mass="10752">MSGPNGDPNISVDDGIIEDEDEFSEEEYAAIDSMLDQINSCLDDIEDRNDALNGKLHELLESNRQARKDFRQQLNDEEASPPPAEDPASRDTQTED</sequence>
<proteinExistence type="inferred from homology"/>
<evidence type="ECO:0000250" key="1">
    <source>
        <dbReference type="UniProtKB" id="Q18012"/>
    </source>
</evidence>
<evidence type="ECO:0000250" key="2">
    <source>
        <dbReference type="UniProtKB" id="Q9BUW7"/>
    </source>
</evidence>
<evidence type="ECO:0000255" key="3"/>
<evidence type="ECO:0000256" key="4">
    <source>
        <dbReference type="SAM" id="MobiDB-lite"/>
    </source>
</evidence>
<evidence type="ECO:0000305" key="5"/>
<protein>
    <recommendedName>
        <fullName evidence="2">Bublin coiled-coil protein</fullName>
    </recommendedName>
    <alternativeName>
        <fullName>UPF0184 protein C9orf16 homolog</fullName>
    </alternativeName>
</protein>
<reference key="1">
    <citation type="journal article" date="2005" name="Parasitol. Res.">
        <title>Identification of immune genes in grass carp Ctenopharyngodon idella in response to infection of the parasitic copepod Sinergasilus major.</title>
        <authorList>
            <person name="Chang M.X."/>
            <person name="Nie P."/>
            <person name="Liu G.Y."/>
            <person name="Song Y."/>
            <person name="Gao Q."/>
        </authorList>
    </citation>
    <scope>NUCLEOTIDE SEQUENCE [MRNA]</scope>
</reference>
<feature type="chain" id="PRO_0000365074" description="Bublin coiled-coil protein">
    <location>
        <begin position="1"/>
        <end position="96"/>
    </location>
</feature>
<feature type="region of interest" description="Disordered" evidence="4">
    <location>
        <begin position="63"/>
        <end position="96"/>
    </location>
</feature>
<feature type="coiled-coil region" evidence="3">
    <location>
        <begin position="39"/>
        <end position="79"/>
    </location>
</feature>
<feature type="compositionally biased region" description="Basic and acidic residues" evidence="4">
    <location>
        <begin position="87"/>
        <end position="96"/>
    </location>
</feature>
<accession>Q6SXP0</accession>
<keyword id="KW-0965">Cell junction</keyword>
<keyword id="KW-0175">Coiled coil</keyword>
<keyword id="KW-0963">Cytoplasm</keyword>
<keyword id="KW-0206">Cytoskeleton</keyword>
<comment type="function">
    <text evidence="1">Essential for intermediate filament organization in intestinal cells, interacts with intermediate filament and regulates intestinal lumen morphology.</text>
</comment>
<comment type="subcellular location">
    <subcellularLocation>
        <location evidence="2">Cell junction</location>
    </subcellularLocation>
    <subcellularLocation>
        <location evidence="2">Cytoplasm</location>
        <location evidence="2">Cytoskeleton</location>
    </subcellularLocation>
    <text evidence="2">In the intestine, localizes subapically and at cell junctions. Interacts with intermediate filament (IF) proteins and localizes to the IF network in an IF-dependent manner. In dividing cells, localizes to interpolar and kinetochore microtubules.</text>
</comment>
<comment type="similarity">
    <text evidence="5">Belongs to the UPF0184 (EST00098) family.</text>
</comment>
<name>BBLN_CTEID</name>
<organism>
    <name type="scientific">Ctenopharyngodon idella</name>
    <name type="common">Grass carp</name>
    <name type="synonym">Leuciscus idella</name>
    <dbReference type="NCBI Taxonomy" id="7959"/>
    <lineage>
        <taxon>Eukaryota</taxon>
        <taxon>Metazoa</taxon>
        <taxon>Chordata</taxon>
        <taxon>Craniata</taxon>
        <taxon>Vertebrata</taxon>
        <taxon>Euteleostomi</taxon>
        <taxon>Actinopterygii</taxon>
        <taxon>Neopterygii</taxon>
        <taxon>Teleostei</taxon>
        <taxon>Ostariophysi</taxon>
        <taxon>Cypriniformes</taxon>
        <taxon>Xenocyprididae</taxon>
        <taxon>Xenocypridinae</taxon>
        <taxon>Ctenopharyngodon</taxon>
    </lineage>
</organism>